<gene>
    <name evidence="1" type="primary">lepA</name>
    <name type="ordered locus">BURPS668_2781</name>
</gene>
<reference key="1">
    <citation type="journal article" date="2010" name="Genome Biol. Evol.">
        <title>Continuing evolution of Burkholderia mallei through genome reduction and large-scale rearrangements.</title>
        <authorList>
            <person name="Losada L."/>
            <person name="Ronning C.M."/>
            <person name="DeShazer D."/>
            <person name="Woods D."/>
            <person name="Fedorova N."/>
            <person name="Kim H.S."/>
            <person name="Shabalina S.A."/>
            <person name="Pearson T.R."/>
            <person name="Brinkac L."/>
            <person name="Tan P."/>
            <person name="Nandi T."/>
            <person name="Crabtree J."/>
            <person name="Badger J."/>
            <person name="Beckstrom-Sternberg S."/>
            <person name="Saqib M."/>
            <person name="Schutzer S.E."/>
            <person name="Keim P."/>
            <person name="Nierman W.C."/>
        </authorList>
    </citation>
    <scope>NUCLEOTIDE SEQUENCE [LARGE SCALE GENOMIC DNA]</scope>
    <source>
        <strain>668</strain>
    </source>
</reference>
<keyword id="KW-0997">Cell inner membrane</keyword>
<keyword id="KW-1003">Cell membrane</keyword>
<keyword id="KW-0342">GTP-binding</keyword>
<keyword id="KW-0378">Hydrolase</keyword>
<keyword id="KW-0472">Membrane</keyword>
<keyword id="KW-0547">Nucleotide-binding</keyword>
<keyword id="KW-0648">Protein biosynthesis</keyword>
<comment type="function">
    <text evidence="1">Required for accurate and efficient protein synthesis under certain stress conditions. May act as a fidelity factor of the translation reaction, by catalyzing a one-codon backward translocation of tRNAs on improperly translocated ribosomes. Back-translocation proceeds from a post-translocation (POST) complex to a pre-translocation (PRE) complex, thus giving elongation factor G a second chance to translocate the tRNAs correctly. Binds to ribosomes in a GTP-dependent manner.</text>
</comment>
<comment type="catalytic activity">
    <reaction evidence="1">
        <text>GTP + H2O = GDP + phosphate + H(+)</text>
        <dbReference type="Rhea" id="RHEA:19669"/>
        <dbReference type="ChEBI" id="CHEBI:15377"/>
        <dbReference type="ChEBI" id="CHEBI:15378"/>
        <dbReference type="ChEBI" id="CHEBI:37565"/>
        <dbReference type="ChEBI" id="CHEBI:43474"/>
        <dbReference type="ChEBI" id="CHEBI:58189"/>
        <dbReference type="EC" id="3.6.5.n1"/>
    </reaction>
</comment>
<comment type="subcellular location">
    <subcellularLocation>
        <location evidence="1">Cell inner membrane</location>
        <topology evidence="1">Peripheral membrane protein</topology>
        <orientation evidence="1">Cytoplasmic side</orientation>
    </subcellularLocation>
</comment>
<comment type="similarity">
    <text evidence="1">Belongs to the TRAFAC class translation factor GTPase superfamily. Classic translation factor GTPase family. LepA subfamily.</text>
</comment>
<evidence type="ECO:0000255" key="1">
    <source>
        <dbReference type="HAMAP-Rule" id="MF_00071"/>
    </source>
</evidence>
<feature type="chain" id="PRO_1000031978" description="Elongation factor 4">
    <location>
        <begin position="1"/>
        <end position="597"/>
    </location>
</feature>
<feature type="domain" description="tr-type G">
    <location>
        <begin position="2"/>
        <end position="184"/>
    </location>
</feature>
<feature type="binding site" evidence="1">
    <location>
        <begin position="14"/>
        <end position="19"/>
    </location>
    <ligand>
        <name>GTP</name>
        <dbReference type="ChEBI" id="CHEBI:37565"/>
    </ligand>
</feature>
<feature type="binding site" evidence="1">
    <location>
        <begin position="131"/>
        <end position="134"/>
    </location>
    <ligand>
        <name>GTP</name>
        <dbReference type="ChEBI" id="CHEBI:37565"/>
    </ligand>
</feature>
<proteinExistence type="inferred from homology"/>
<organism>
    <name type="scientific">Burkholderia pseudomallei (strain 668)</name>
    <dbReference type="NCBI Taxonomy" id="320373"/>
    <lineage>
        <taxon>Bacteria</taxon>
        <taxon>Pseudomonadati</taxon>
        <taxon>Pseudomonadota</taxon>
        <taxon>Betaproteobacteria</taxon>
        <taxon>Burkholderiales</taxon>
        <taxon>Burkholderiaceae</taxon>
        <taxon>Burkholderia</taxon>
        <taxon>pseudomallei group</taxon>
    </lineage>
</organism>
<dbReference type="EC" id="3.6.5.n1" evidence="1"/>
<dbReference type="EMBL" id="CP000570">
    <property type="protein sequence ID" value="ABN83967.1"/>
    <property type="molecule type" value="Genomic_DNA"/>
</dbReference>
<dbReference type="RefSeq" id="WP_004193305.1">
    <property type="nucleotide sequence ID" value="NC_009074.1"/>
</dbReference>
<dbReference type="SMR" id="A3NBT1"/>
<dbReference type="GeneID" id="93061011"/>
<dbReference type="KEGG" id="bpd:BURPS668_2781"/>
<dbReference type="HOGENOM" id="CLU_009995_3_3_4"/>
<dbReference type="GO" id="GO:0005886">
    <property type="term" value="C:plasma membrane"/>
    <property type="evidence" value="ECO:0007669"/>
    <property type="project" value="UniProtKB-SubCell"/>
</dbReference>
<dbReference type="GO" id="GO:0005525">
    <property type="term" value="F:GTP binding"/>
    <property type="evidence" value="ECO:0007669"/>
    <property type="project" value="UniProtKB-UniRule"/>
</dbReference>
<dbReference type="GO" id="GO:0003924">
    <property type="term" value="F:GTPase activity"/>
    <property type="evidence" value="ECO:0007669"/>
    <property type="project" value="UniProtKB-UniRule"/>
</dbReference>
<dbReference type="GO" id="GO:0097216">
    <property type="term" value="F:guanosine tetraphosphate binding"/>
    <property type="evidence" value="ECO:0007669"/>
    <property type="project" value="UniProtKB-ARBA"/>
</dbReference>
<dbReference type="GO" id="GO:0043022">
    <property type="term" value="F:ribosome binding"/>
    <property type="evidence" value="ECO:0007669"/>
    <property type="project" value="UniProtKB-UniRule"/>
</dbReference>
<dbReference type="GO" id="GO:0003746">
    <property type="term" value="F:translation elongation factor activity"/>
    <property type="evidence" value="ECO:0007669"/>
    <property type="project" value="UniProtKB-UniRule"/>
</dbReference>
<dbReference type="GO" id="GO:0045727">
    <property type="term" value="P:positive regulation of translation"/>
    <property type="evidence" value="ECO:0007669"/>
    <property type="project" value="UniProtKB-UniRule"/>
</dbReference>
<dbReference type="CDD" id="cd03699">
    <property type="entry name" value="EF4_II"/>
    <property type="match status" value="1"/>
</dbReference>
<dbReference type="CDD" id="cd16260">
    <property type="entry name" value="EF4_III"/>
    <property type="match status" value="1"/>
</dbReference>
<dbReference type="CDD" id="cd01890">
    <property type="entry name" value="LepA"/>
    <property type="match status" value="1"/>
</dbReference>
<dbReference type="CDD" id="cd03709">
    <property type="entry name" value="lepA_C"/>
    <property type="match status" value="1"/>
</dbReference>
<dbReference type="FunFam" id="3.40.50.300:FF:000078">
    <property type="entry name" value="Elongation factor 4"/>
    <property type="match status" value="1"/>
</dbReference>
<dbReference type="FunFam" id="2.40.30.10:FF:000015">
    <property type="entry name" value="Translation factor GUF1, mitochondrial"/>
    <property type="match status" value="1"/>
</dbReference>
<dbReference type="FunFam" id="3.30.70.240:FF:000007">
    <property type="entry name" value="Translation factor GUF1, mitochondrial"/>
    <property type="match status" value="1"/>
</dbReference>
<dbReference type="FunFam" id="3.30.70.2570:FF:000001">
    <property type="entry name" value="Translation factor GUF1, mitochondrial"/>
    <property type="match status" value="1"/>
</dbReference>
<dbReference type="FunFam" id="3.30.70.870:FF:000004">
    <property type="entry name" value="Translation factor GUF1, mitochondrial"/>
    <property type="match status" value="1"/>
</dbReference>
<dbReference type="Gene3D" id="3.30.70.240">
    <property type="match status" value="1"/>
</dbReference>
<dbReference type="Gene3D" id="3.30.70.2570">
    <property type="entry name" value="Elongation factor 4, C-terminal domain"/>
    <property type="match status" value="1"/>
</dbReference>
<dbReference type="Gene3D" id="3.30.70.870">
    <property type="entry name" value="Elongation Factor G (Translational Gtpase), domain 3"/>
    <property type="match status" value="1"/>
</dbReference>
<dbReference type="Gene3D" id="3.40.50.300">
    <property type="entry name" value="P-loop containing nucleotide triphosphate hydrolases"/>
    <property type="match status" value="1"/>
</dbReference>
<dbReference type="Gene3D" id="2.40.30.10">
    <property type="entry name" value="Translation factors"/>
    <property type="match status" value="1"/>
</dbReference>
<dbReference type="HAMAP" id="MF_00071">
    <property type="entry name" value="LepA"/>
    <property type="match status" value="1"/>
</dbReference>
<dbReference type="InterPro" id="IPR006297">
    <property type="entry name" value="EF-4"/>
</dbReference>
<dbReference type="InterPro" id="IPR035647">
    <property type="entry name" value="EFG_III/V"/>
</dbReference>
<dbReference type="InterPro" id="IPR000640">
    <property type="entry name" value="EFG_V-like"/>
</dbReference>
<dbReference type="InterPro" id="IPR004161">
    <property type="entry name" value="EFTu-like_2"/>
</dbReference>
<dbReference type="InterPro" id="IPR031157">
    <property type="entry name" value="G_TR_CS"/>
</dbReference>
<dbReference type="InterPro" id="IPR038363">
    <property type="entry name" value="LepA_C_sf"/>
</dbReference>
<dbReference type="InterPro" id="IPR013842">
    <property type="entry name" value="LepA_CTD"/>
</dbReference>
<dbReference type="InterPro" id="IPR035654">
    <property type="entry name" value="LepA_IV"/>
</dbReference>
<dbReference type="InterPro" id="IPR027417">
    <property type="entry name" value="P-loop_NTPase"/>
</dbReference>
<dbReference type="InterPro" id="IPR005225">
    <property type="entry name" value="Small_GTP-bd"/>
</dbReference>
<dbReference type="InterPro" id="IPR000795">
    <property type="entry name" value="T_Tr_GTP-bd_dom"/>
</dbReference>
<dbReference type="InterPro" id="IPR009000">
    <property type="entry name" value="Transl_B-barrel_sf"/>
</dbReference>
<dbReference type="NCBIfam" id="TIGR01393">
    <property type="entry name" value="lepA"/>
    <property type="match status" value="1"/>
</dbReference>
<dbReference type="NCBIfam" id="TIGR00231">
    <property type="entry name" value="small_GTP"/>
    <property type="match status" value="1"/>
</dbReference>
<dbReference type="PANTHER" id="PTHR43512:SF4">
    <property type="entry name" value="TRANSLATION FACTOR GUF1 HOMOLOG, CHLOROPLASTIC"/>
    <property type="match status" value="1"/>
</dbReference>
<dbReference type="PANTHER" id="PTHR43512">
    <property type="entry name" value="TRANSLATION FACTOR GUF1-RELATED"/>
    <property type="match status" value="1"/>
</dbReference>
<dbReference type="Pfam" id="PF00679">
    <property type="entry name" value="EFG_C"/>
    <property type="match status" value="1"/>
</dbReference>
<dbReference type="Pfam" id="PF00009">
    <property type="entry name" value="GTP_EFTU"/>
    <property type="match status" value="1"/>
</dbReference>
<dbReference type="Pfam" id="PF03144">
    <property type="entry name" value="GTP_EFTU_D2"/>
    <property type="match status" value="1"/>
</dbReference>
<dbReference type="Pfam" id="PF06421">
    <property type="entry name" value="LepA_C"/>
    <property type="match status" value="1"/>
</dbReference>
<dbReference type="PRINTS" id="PR00315">
    <property type="entry name" value="ELONGATNFCT"/>
</dbReference>
<dbReference type="SMART" id="SM00838">
    <property type="entry name" value="EFG_C"/>
    <property type="match status" value="1"/>
</dbReference>
<dbReference type="SUPFAM" id="SSF54980">
    <property type="entry name" value="EF-G C-terminal domain-like"/>
    <property type="match status" value="2"/>
</dbReference>
<dbReference type="SUPFAM" id="SSF52540">
    <property type="entry name" value="P-loop containing nucleoside triphosphate hydrolases"/>
    <property type="match status" value="1"/>
</dbReference>
<dbReference type="SUPFAM" id="SSF50447">
    <property type="entry name" value="Translation proteins"/>
    <property type="match status" value="1"/>
</dbReference>
<dbReference type="PROSITE" id="PS00301">
    <property type="entry name" value="G_TR_1"/>
    <property type="match status" value="1"/>
</dbReference>
<dbReference type="PROSITE" id="PS51722">
    <property type="entry name" value="G_TR_2"/>
    <property type="match status" value="1"/>
</dbReference>
<name>LEPA_BURP6</name>
<accession>A3NBT1</accession>
<sequence>MDHIRNFSIIAHIDHGKSTLADRIIQLCGGLSDREMESQVLDSMDLERERGITIKAQTAALTYRARDGKVYNLNLIDTPGHVDFSYEVSRSLSACEGALLVVDASQGVEAQTVANCYTAIELGVEVVPVLNKIDLPAANPENAIAEIEDVIGIDAMDAVRCSAKTGLGVEDVLESLIAKVPPPKGDPDAPLQALIIDSWFDNYVGVVMLVRIVNGTLRPKERIKLMATDAQYAVEHVGVFTPKSRNLESLSAGQVGFIISGIKELTAAKVGDTVTHATKPAPEPLPGFKEVKPQVFAGLYPVEANQYDALRESLEKLKLNDASLQYEPEVSQALGFGFRCGFLGLLHMEIVQERLEREFDMDLITTAPTVVYEVVQSDGTTIMVENPAKMPEPARIAEIREPIVTVNLYMPQDYVGSVITLCEQKRGTQINMQYHGRQVQLTYEIPMAEIVLDFFDRLKSVSRGYASMDYEFKEYRTSDVVKVDMLINGDKVDALSIIVHRSQSQYRGREVAAKMREIIPRQMYDVAIQAAIGAHIIARENIKALRKNVLAKCYGGDITRKKKLLEKQKEGKKRMKQVGSVEIPQEAFLAILRVEDK</sequence>
<protein>
    <recommendedName>
        <fullName evidence="1">Elongation factor 4</fullName>
        <shortName evidence="1">EF-4</shortName>
        <ecNumber evidence="1">3.6.5.n1</ecNumber>
    </recommendedName>
    <alternativeName>
        <fullName evidence="1">Ribosomal back-translocase LepA</fullName>
    </alternativeName>
</protein>